<organism>
    <name type="scientific">Alkalilimnicola ehrlichii (strain ATCC BAA-1101 / DSM 17681 / MLHE-1)</name>
    <dbReference type="NCBI Taxonomy" id="187272"/>
    <lineage>
        <taxon>Bacteria</taxon>
        <taxon>Pseudomonadati</taxon>
        <taxon>Pseudomonadota</taxon>
        <taxon>Gammaproteobacteria</taxon>
        <taxon>Chromatiales</taxon>
        <taxon>Ectothiorhodospiraceae</taxon>
        <taxon>Alkalilimnicola</taxon>
    </lineage>
</organism>
<keyword id="KW-1185">Reference proteome</keyword>
<keyword id="KW-0694">RNA-binding</keyword>
<keyword id="KW-0804">Transcription</keyword>
<keyword id="KW-0889">Transcription antitermination</keyword>
<keyword id="KW-0805">Transcription regulation</keyword>
<feature type="chain" id="PRO_0000265477" description="Transcription antitermination protein NusB">
    <location>
        <begin position="1"/>
        <end position="178"/>
    </location>
</feature>
<sequence>MSTSESPNTPGQGRRARARARELALLALYQWQMTGQDLGAIEAQHLEIDPEEPPVEAGDDEHYPRYPHDGLDRPYFRALLHGVPARLNDLDQALEPLLDRPLRTLDPLEKALLRLGAWELSERMDTPWRVIINEAVNLAKRFGAEQSHRYINGVLDKLARGLPLRATEIEADRKRRGR</sequence>
<dbReference type="EMBL" id="CP000453">
    <property type="protein sequence ID" value="ABI55734.1"/>
    <property type="molecule type" value="Genomic_DNA"/>
</dbReference>
<dbReference type="RefSeq" id="WP_011628130.1">
    <property type="nucleotide sequence ID" value="NC_008340.1"/>
</dbReference>
<dbReference type="SMR" id="Q0ABQ3"/>
<dbReference type="KEGG" id="aeh:Mlg_0379"/>
<dbReference type="eggNOG" id="COG0781">
    <property type="taxonomic scope" value="Bacteria"/>
</dbReference>
<dbReference type="HOGENOM" id="CLU_087843_4_1_6"/>
<dbReference type="OrthoDB" id="9789556at2"/>
<dbReference type="Proteomes" id="UP000001962">
    <property type="component" value="Chromosome"/>
</dbReference>
<dbReference type="GO" id="GO:0005829">
    <property type="term" value="C:cytosol"/>
    <property type="evidence" value="ECO:0007669"/>
    <property type="project" value="TreeGrafter"/>
</dbReference>
<dbReference type="GO" id="GO:0003723">
    <property type="term" value="F:RNA binding"/>
    <property type="evidence" value="ECO:0007669"/>
    <property type="project" value="UniProtKB-UniRule"/>
</dbReference>
<dbReference type="GO" id="GO:0006353">
    <property type="term" value="P:DNA-templated transcription termination"/>
    <property type="evidence" value="ECO:0007669"/>
    <property type="project" value="UniProtKB-UniRule"/>
</dbReference>
<dbReference type="GO" id="GO:0031564">
    <property type="term" value="P:transcription antitermination"/>
    <property type="evidence" value="ECO:0007669"/>
    <property type="project" value="UniProtKB-KW"/>
</dbReference>
<dbReference type="Gene3D" id="1.10.940.10">
    <property type="entry name" value="NusB-like"/>
    <property type="match status" value="1"/>
</dbReference>
<dbReference type="HAMAP" id="MF_00073">
    <property type="entry name" value="NusB"/>
    <property type="match status" value="1"/>
</dbReference>
<dbReference type="InterPro" id="IPR035926">
    <property type="entry name" value="NusB-like_sf"/>
</dbReference>
<dbReference type="InterPro" id="IPR011605">
    <property type="entry name" value="NusB_fam"/>
</dbReference>
<dbReference type="InterPro" id="IPR006027">
    <property type="entry name" value="NusB_RsmB_TIM44"/>
</dbReference>
<dbReference type="NCBIfam" id="TIGR01951">
    <property type="entry name" value="nusB"/>
    <property type="match status" value="1"/>
</dbReference>
<dbReference type="PANTHER" id="PTHR11078:SF3">
    <property type="entry name" value="ANTITERMINATION NUSB DOMAIN-CONTAINING PROTEIN"/>
    <property type="match status" value="1"/>
</dbReference>
<dbReference type="PANTHER" id="PTHR11078">
    <property type="entry name" value="N UTILIZATION SUBSTANCE PROTEIN B-RELATED"/>
    <property type="match status" value="1"/>
</dbReference>
<dbReference type="Pfam" id="PF01029">
    <property type="entry name" value="NusB"/>
    <property type="match status" value="1"/>
</dbReference>
<dbReference type="SUPFAM" id="SSF48013">
    <property type="entry name" value="NusB-like"/>
    <property type="match status" value="1"/>
</dbReference>
<gene>
    <name evidence="1" type="primary">nusB</name>
    <name type="ordered locus">Mlg_0379</name>
</gene>
<evidence type="ECO:0000255" key="1">
    <source>
        <dbReference type="HAMAP-Rule" id="MF_00073"/>
    </source>
</evidence>
<comment type="function">
    <text evidence="1">Involved in transcription antitermination. Required for transcription of ribosomal RNA (rRNA) genes. Binds specifically to the boxA antiterminator sequence of the ribosomal RNA (rrn) operons.</text>
</comment>
<comment type="similarity">
    <text evidence="1">Belongs to the NusB family.</text>
</comment>
<reference key="1">
    <citation type="submission" date="2006-08" db="EMBL/GenBank/DDBJ databases">
        <title>Complete sequence of Alkalilimnicola ehrilichei MLHE-1.</title>
        <authorList>
            <person name="Copeland A."/>
            <person name="Lucas S."/>
            <person name="Lapidus A."/>
            <person name="Barry K."/>
            <person name="Detter J.C."/>
            <person name="Glavina del Rio T."/>
            <person name="Hammon N."/>
            <person name="Israni S."/>
            <person name="Dalin E."/>
            <person name="Tice H."/>
            <person name="Pitluck S."/>
            <person name="Sims D."/>
            <person name="Brettin T."/>
            <person name="Bruce D."/>
            <person name="Han C."/>
            <person name="Tapia R."/>
            <person name="Gilna P."/>
            <person name="Schmutz J."/>
            <person name="Larimer F."/>
            <person name="Land M."/>
            <person name="Hauser L."/>
            <person name="Kyrpides N."/>
            <person name="Mikhailova N."/>
            <person name="Oremland R.S."/>
            <person name="Hoeft S.E."/>
            <person name="Switzer-Blum J."/>
            <person name="Kulp T."/>
            <person name="King G."/>
            <person name="Tabita R."/>
            <person name="Witte B."/>
            <person name="Santini J.M."/>
            <person name="Basu P."/>
            <person name="Hollibaugh J.T."/>
            <person name="Xie G."/>
            <person name="Stolz J.F."/>
            <person name="Richardson P."/>
        </authorList>
    </citation>
    <scope>NUCLEOTIDE SEQUENCE [LARGE SCALE GENOMIC DNA]</scope>
    <source>
        <strain>ATCC BAA-1101 / DSM 17681 / MLHE-1</strain>
    </source>
</reference>
<name>NUSB_ALKEH</name>
<protein>
    <recommendedName>
        <fullName evidence="1">Transcription antitermination protein NusB</fullName>
    </recommendedName>
    <alternativeName>
        <fullName evidence="1">Antitermination factor NusB</fullName>
    </alternativeName>
</protein>
<proteinExistence type="inferred from homology"/>
<accession>Q0ABQ3</accession>